<organism>
    <name type="scientific">Tolumonas auensis (strain DSM 9187 / NBRC 110442 / TA 4)</name>
    <dbReference type="NCBI Taxonomy" id="595494"/>
    <lineage>
        <taxon>Bacteria</taxon>
        <taxon>Pseudomonadati</taxon>
        <taxon>Pseudomonadota</taxon>
        <taxon>Gammaproteobacteria</taxon>
        <taxon>Aeromonadales</taxon>
        <taxon>Aeromonadaceae</taxon>
        <taxon>Tolumonas</taxon>
    </lineage>
</organism>
<accession>C4LCP0</accession>
<proteinExistence type="inferred from homology"/>
<sequence>MSEQNQTPDAELDVQEFNNEMTQRRAKLAELRTKGNPFPNDFRRDQISNELHAAFDDKSQDELAAEKHYVKIAGRIMTRRIMGKASFATLQDMGGKIQIYVTRDDLPEGFYNEQFKKWDLGDIVGVEGYMFRTNTGELSVHTTSIRLLTKALRPLPEKHKGLTDQEARCRQRYLDLIANEESRRTFQIRNQVMNGIRNFLNSKNFMEVETPMMQVIPGGASARPFVTHHNALDIDMYLRIAPELYLKRLVVGGFERVYEVNRNFRNEGISVRHNPEFTMLEFYMAYADYNDLMDLTEEMLRTLAQNIHGTTKIRYAKDGEEGIEIDFGQPFARMTMVESILKYGNDVKAEELTTLEGAIAVAKRHHVELMKSWELGHVITAIFEETAEHMLHQPTFITEYPAAVSPLARRNDDNPEVTDRFEFFIGGREIANGFSELNDAEDQAERFQAQVAQKEAGDDEAMFYDADFVTALEHGLPPTAGQGIGIDRLVMLFTNSHTIRDVILFPALRPSNK</sequence>
<protein>
    <recommendedName>
        <fullName evidence="1">Lysine--tRNA ligase</fullName>
        <ecNumber evidence="1">6.1.1.6</ecNumber>
    </recommendedName>
    <alternativeName>
        <fullName evidence="1">Lysyl-tRNA synthetase</fullName>
        <shortName evidence="1">LysRS</shortName>
    </alternativeName>
</protein>
<evidence type="ECO:0000255" key="1">
    <source>
        <dbReference type="HAMAP-Rule" id="MF_00252"/>
    </source>
</evidence>
<name>SYK_TOLAT</name>
<gene>
    <name evidence="1" type="primary">lysS</name>
    <name type="ordered locus">Tola_0976</name>
</gene>
<reference key="1">
    <citation type="submission" date="2009-05" db="EMBL/GenBank/DDBJ databases">
        <title>Complete sequence of Tolumonas auensis DSM 9187.</title>
        <authorList>
            <consortium name="US DOE Joint Genome Institute"/>
            <person name="Lucas S."/>
            <person name="Copeland A."/>
            <person name="Lapidus A."/>
            <person name="Glavina del Rio T."/>
            <person name="Tice H."/>
            <person name="Bruce D."/>
            <person name="Goodwin L."/>
            <person name="Pitluck S."/>
            <person name="Chertkov O."/>
            <person name="Brettin T."/>
            <person name="Detter J.C."/>
            <person name="Han C."/>
            <person name="Larimer F."/>
            <person name="Land M."/>
            <person name="Hauser L."/>
            <person name="Kyrpides N."/>
            <person name="Mikhailova N."/>
            <person name="Spring S."/>
            <person name="Beller H."/>
        </authorList>
    </citation>
    <scope>NUCLEOTIDE SEQUENCE [LARGE SCALE GENOMIC DNA]</scope>
    <source>
        <strain>DSM 9187 / NBRC 110442 / TA 4</strain>
    </source>
</reference>
<comment type="catalytic activity">
    <reaction evidence="1">
        <text>tRNA(Lys) + L-lysine + ATP = L-lysyl-tRNA(Lys) + AMP + diphosphate</text>
        <dbReference type="Rhea" id="RHEA:20792"/>
        <dbReference type="Rhea" id="RHEA-COMP:9696"/>
        <dbReference type="Rhea" id="RHEA-COMP:9697"/>
        <dbReference type="ChEBI" id="CHEBI:30616"/>
        <dbReference type="ChEBI" id="CHEBI:32551"/>
        <dbReference type="ChEBI" id="CHEBI:33019"/>
        <dbReference type="ChEBI" id="CHEBI:78442"/>
        <dbReference type="ChEBI" id="CHEBI:78529"/>
        <dbReference type="ChEBI" id="CHEBI:456215"/>
        <dbReference type="EC" id="6.1.1.6"/>
    </reaction>
</comment>
<comment type="cofactor">
    <cofactor evidence="1">
        <name>Mg(2+)</name>
        <dbReference type="ChEBI" id="CHEBI:18420"/>
    </cofactor>
    <text evidence="1">Binds 3 Mg(2+) ions per subunit.</text>
</comment>
<comment type="subunit">
    <text evidence="1">Homodimer.</text>
</comment>
<comment type="subcellular location">
    <subcellularLocation>
        <location evidence="1">Cytoplasm</location>
    </subcellularLocation>
</comment>
<comment type="similarity">
    <text evidence="1">Belongs to the class-II aminoacyl-tRNA synthetase family.</text>
</comment>
<keyword id="KW-0030">Aminoacyl-tRNA synthetase</keyword>
<keyword id="KW-0067">ATP-binding</keyword>
<keyword id="KW-0963">Cytoplasm</keyword>
<keyword id="KW-0436">Ligase</keyword>
<keyword id="KW-0460">Magnesium</keyword>
<keyword id="KW-0479">Metal-binding</keyword>
<keyword id="KW-0547">Nucleotide-binding</keyword>
<keyword id="KW-0648">Protein biosynthesis</keyword>
<keyword id="KW-1185">Reference proteome</keyword>
<dbReference type="EC" id="6.1.1.6" evidence="1"/>
<dbReference type="EMBL" id="CP001616">
    <property type="protein sequence ID" value="ACQ92604.1"/>
    <property type="molecule type" value="Genomic_DNA"/>
</dbReference>
<dbReference type="RefSeq" id="WP_012729203.1">
    <property type="nucleotide sequence ID" value="NC_012691.1"/>
</dbReference>
<dbReference type="SMR" id="C4LCP0"/>
<dbReference type="STRING" id="595494.Tola_0976"/>
<dbReference type="KEGG" id="tau:Tola_0976"/>
<dbReference type="eggNOG" id="COG1190">
    <property type="taxonomic scope" value="Bacteria"/>
</dbReference>
<dbReference type="HOGENOM" id="CLU_008255_6_0_6"/>
<dbReference type="OrthoDB" id="9802326at2"/>
<dbReference type="Proteomes" id="UP000009073">
    <property type="component" value="Chromosome"/>
</dbReference>
<dbReference type="GO" id="GO:0005829">
    <property type="term" value="C:cytosol"/>
    <property type="evidence" value="ECO:0007669"/>
    <property type="project" value="TreeGrafter"/>
</dbReference>
<dbReference type="GO" id="GO:0005524">
    <property type="term" value="F:ATP binding"/>
    <property type="evidence" value="ECO:0007669"/>
    <property type="project" value="UniProtKB-UniRule"/>
</dbReference>
<dbReference type="GO" id="GO:0004824">
    <property type="term" value="F:lysine-tRNA ligase activity"/>
    <property type="evidence" value="ECO:0007669"/>
    <property type="project" value="UniProtKB-UniRule"/>
</dbReference>
<dbReference type="GO" id="GO:0000287">
    <property type="term" value="F:magnesium ion binding"/>
    <property type="evidence" value="ECO:0007669"/>
    <property type="project" value="UniProtKB-UniRule"/>
</dbReference>
<dbReference type="GO" id="GO:0000049">
    <property type="term" value="F:tRNA binding"/>
    <property type="evidence" value="ECO:0007669"/>
    <property type="project" value="TreeGrafter"/>
</dbReference>
<dbReference type="GO" id="GO:0006430">
    <property type="term" value="P:lysyl-tRNA aminoacylation"/>
    <property type="evidence" value="ECO:0007669"/>
    <property type="project" value="UniProtKB-UniRule"/>
</dbReference>
<dbReference type="CDD" id="cd00775">
    <property type="entry name" value="LysRS_core"/>
    <property type="match status" value="1"/>
</dbReference>
<dbReference type="CDD" id="cd04322">
    <property type="entry name" value="LysRS_N"/>
    <property type="match status" value="1"/>
</dbReference>
<dbReference type="FunFam" id="2.40.50.140:FF:000024">
    <property type="entry name" value="Lysine--tRNA ligase"/>
    <property type="match status" value="1"/>
</dbReference>
<dbReference type="FunFam" id="3.30.930.10:FF:000001">
    <property type="entry name" value="Lysine--tRNA ligase"/>
    <property type="match status" value="1"/>
</dbReference>
<dbReference type="Gene3D" id="3.30.930.10">
    <property type="entry name" value="Bira Bifunctional Protein, Domain 2"/>
    <property type="match status" value="1"/>
</dbReference>
<dbReference type="Gene3D" id="2.40.50.140">
    <property type="entry name" value="Nucleic acid-binding proteins"/>
    <property type="match status" value="1"/>
</dbReference>
<dbReference type="HAMAP" id="MF_00252">
    <property type="entry name" value="Lys_tRNA_synth_class2"/>
    <property type="match status" value="1"/>
</dbReference>
<dbReference type="InterPro" id="IPR004364">
    <property type="entry name" value="Aa-tRNA-synt_II"/>
</dbReference>
<dbReference type="InterPro" id="IPR006195">
    <property type="entry name" value="aa-tRNA-synth_II"/>
</dbReference>
<dbReference type="InterPro" id="IPR045864">
    <property type="entry name" value="aa-tRNA-synth_II/BPL/LPL"/>
</dbReference>
<dbReference type="InterPro" id="IPR002313">
    <property type="entry name" value="Lys-tRNA-ligase_II"/>
</dbReference>
<dbReference type="InterPro" id="IPR034762">
    <property type="entry name" value="Lys-tRNA-ligase_II_bac/euk"/>
</dbReference>
<dbReference type="InterPro" id="IPR044136">
    <property type="entry name" value="Lys-tRNA-ligase_II_N"/>
</dbReference>
<dbReference type="InterPro" id="IPR018149">
    <property type="entry name" value="Lys-tRNA-synth_II_C"/>
</dbReference>
<dbReference type="InterPro" id="IPR012340">
    <property type="entry name" value="NA-bd_OB-fold"/>
</dbReference>
<dbReference type="InterPro" id="IPR004365">
    <property type="entry name" value="NA-bd_OB_tRNA"/>
</dbReference>
<dbReference type="NCBIfam" id="TIGR00499">
    <property type="entry name" value="lysS_bact"/>
    <property type="match status" value="1"/>
</dbReference>
<dbReference type="NCBIfam" id="NF001756">
    <property type="entry name" value="PRK00484.1"/>
    <property type="match status" value="1"/>
</dbReference>
<dbReference type="PANTHER" id="PTHR42918:SF15">
    <property type="entry name" value="LYSINE--TRNA LIGASE, CHLOROPLASTIC_MITOCHONDRIAL"/>
    <property type="match status" value="1"/>
</dbReference>
<dbReference type="PANTHER" id="PTHR42918">
    <property type="entry name" value="LYSYL-TRNA SYNTHETASE"/>
    <property type="match status" value="1"/>
</dbReference>
<dbReference type="Pfam" id="PF00152">
    <property type="entry name" value="tRNA-synt_2"/>
    <property type="match status" value="1"/>
</dbReference>
<dbReference type="Pfam" id="PF01336">
    <property type="entry name" value="tRNA_anti-codon"/>
    <property type="match status" value="1"/>
</dbReference>
<dbReference type="PIRSF" id="PIRSF039101">
    <property type="entry name" value="LysRS2"/>
    <property type="match status" value="1"/>
</dbReference>
<dbReference type="PRINTS" id="PR00982">
    <property type="entry name" value="TRNASYNTHLYS"/>
</dbReference>
<dbReference type="SUPFAM" id="SSF55681">
    <property type="entry name" value="Class II aaRS and biotin synthetases"/>
    <property type="match status" value="1"/>
</dbReference>
<dbReference type="SUPFAM" id="SSF50249">
    <property type="entry name" value="Nucleic acid-binding proteins"/>
    <property type="match status" value="1"/>
</dbReference>
<dbReference type="PROSITE" id="PS50862">
    <property type="entry name" value="AA_TRNA_LIGASE_II"/>
    <property type="match status" value="1"/>
</dbReference>
<feature type="chain" id="PRO_1000204577" description="Lysine--tRNA ligase">
    <location>
        <begin position="1"/>
        <end position="513"/>
    </location>
</feature>
<feature type="binding site" evidence="1">
    <location>
        <position position="422"/>
    </location>
    <ligand>
        <name>Mg(2+)</name>
        <dbReference type="ChEBI" id="CHEBI:18420"/>
        <label>1</label>
    </ligand>
</feature>
<feature type="binding site" evidence="1">
    <location>
        <position position="429"/>
    </location>
    <ligand>
        <name>Mg(2+)</name>
        <dbReference type="ChEBI" id="CHEBI:18420"/>
        <label>1</label>
    </ligand>
</feature>
<feature type="binding site" evidence="1">
    <location>
        <position position="429"/>
    </location>
    <ligand>
        <name>Mg(2+)</name>
        <dbReference type="ChEBI" id="CHEBI:18420"/>
        <label>2</label>
    </ligand>
</feature>